<organism>
    <name type="scientific">Cavia porcellus</name>
    <name type="common">Guinea pig</name>
    <dbReference type="NCBI Taxonomy" id="10141"/>
    <lineage>
        <taxon>Eukaryota</taxon>
        <taxon>Metazoa</taxon>
        <taxon>Chordata</taxon>
        <taxon>Craniata</taxon>
        <taxon>Vertebrata</taxon>
        <taxon>Euteleostomi</taxon>
        <taxon>Mammalia</taxon>
        <taxon>Eutheria</taxon>
        <taxon>Euarchontoglires</taxon>
        <taxon>Glires</taxon>
        <taxon>Rodentia</taxon>
        <taxon>Hystricomorpha</taxon>
        <taxon>Caviidae</taxon>
        <taxon>Cavia</taxon>
    </lineage>
</organism>
<keyword id="KW-1064">Adaptive immunity</keyword>
<keyword id="KW-1003">Cell membrane</keyword>
<keyword id="KW-1015">Disulfide bond</keyword>
<keyword id="KW-0967">Endosome</keyword>
<keyword id="KW-0325">Glycoprotein</keyword>
<keyword id="KW-0391">Immunity</keyword>
<keyword id="KW-0393">Immunoglobulin domain</keyword>
<keyword id="KW-0472">Membrane</keyword>
<keyword id="KW-1185">Reference proteome</keyword>
<keyword id="KW-0732">Signal</keyword>
<keyword id="KW-0812">Transmembrane</keyword>
<keyword id="KW-1133">Transmembrane helix</keyword>
<comment type="function">
    <text evidence="1">Antigen-presenting protein that binds self and non-self lipid and glycolipid antigens and presents them to T-cell receptors on natural killer T-cells.</text>
</comment>
<comment type="subunit">
    <text evidence="1">Heterodimer with B2M (beta-2-microglobulin).</text>
</comment>
<comment type="subcellular location">
    <subcellularLocation>
        <location evidence="1">Cell membrane</location>
        <topology evidence="1">Single-pass type I membrane protein</topology>
    </subcellularLocation>
    <subcellularLocation>
        <location evidence="1">Endosome membrane</location>
    </subcellularLocation>
    <text evidence="1">Subject to intracellular trafficking between the cell membrane and endosomes.</text>
</comment>
<comment type="miscellaneous">
    <text evidence="1">During protein synthesis and maturation, CD1 family members bind endogenous lipids that are replaced by lipid or glycolipid antigens when the proteins are internalized and pass through endosomes or lysosomes, before trafficking back to the cell surface.</text>
</comment>
<reference key="1">
    <citation type="journal article" date="1999" name="J. Immunol.">
        <title>Conservation of a CD1 multigene family in the guinea pig.</title>
        <authorList>
            <person name="Dascher C.C."/>
            <person name="Hiromatsu K."/>
            <person name="Naylor J.W."/>
            <person name="Brauer P.P."/>
            <person name="Brown K.A."/>
            <person name="Storey J.R."/>
            <person name="Behar S.M."/>
            <person name="Kawasaki E.S."/>
            <person name="Porcelli S.A."/>
            <person name="Brenner M.B."/>
            <person name="LeClair K.P."/>
        </authorList>
    </citation>
    <scope>NUCLEOTIDE SEQUENCE [MRNA]</scope>
    <source>
        <strain>Hartley</strain>
        <strain>NIH 2</strain>
        <tissue>Thymus</tissue>
    </source>
</reference>
<protein>
    <recommendedName>
        <fullName>T-cell surface glycoprotein CD1c2</fullName>
    </recommendedName>
    <cdAntigenName>CD1c-2</cdAntigenName>
</protein>
<evidence type="ECO:0000250" key="1"/>
<evidence type="ECO:0000255" key="2"/>
<evidence type="ECO:0000255" key="3">
    <source>
        <dbReference type="PROSITE-ProRule" id="PRU00114"/>
    </source>
</evidence>
<proteinExistence type="evidence at transcript level"/>
<gene>
    <name type="primary">CD1C2</name>
</gene>
<feature type="signal peptide" evidence="2">
    <location>
        <begin position="1"/>
        <end position="17"/>
    </location>
</feature>
<feature type="chain" id="PRO_0000014588" description="T-cell surface glycoprotein CD1c2">
    <location>
        <begin position="18"/>
        <end position="332"/>
    </location>
</feature>
<feature type="topological domain" description="Extracellular" evidence="2">
    <location>
        <begin position="18"/>
        <end position="300"/>
    </location>
</feature>
<feature type="transmembrane region" description="Helical" evidence="2">
    <location>
        <begin position="301"/>
        <end position="321"/>
    </location>
</feature>
<feature type="topological domain" description="Cytoplasmic" evidence="2">
    <location>
        <begin position="322"/>
        <end position="332"/>
    </location>
</feature>
<feature type="domain" description="Ig-like">
    <location>
        <begin position="205"/>
        <end position="292"/>
    </location>
</feature>
<feature type="glycosylation site" description="N-linked (GlcNAc...) asparagine" evidence="2">
    <location>
        <position position="25"/>
    </location>
</feature>
<feature type="glycosylation site" description="N-linked (GlcNAc...) asparagine" evidence="2">
    <location>
        <position position="38"/>
    </location>
</feature>
<feature type="glycosylation site" description="N-linked (GlcNAc...) asparagine" evidence="2">
    <location>
        <position position="75"/>
    </location>
</feature>
<feature type="disulfide bond" evidence="3">
    <location>
        <begin position="120"/>
        <end position="184"/>
    </location>
</feature>
<feature type="disulfide bond" evidence="3">
    <location>
        <begin position="224"/>
        <end position="279"/>
    </location>
</feature>
<accession>Q9QZY7</accession>
<dbReference type="EMBL" id="AF145488">
    <property type="protein sequence ID" value="AAF12743.1"/>
    <property type="molecule type" value="mRNA"/>
</dbReference>
<dbReference type="RefSeq" id="NP_001166325.1">
    <property type="nucleotide sequence ID" value="NM_001172854.1"/>
</dbReference>
<dbReference type="SMR" id="Q9QZY7"/>
<dbReference type="STRING" id="10141.ENSCPOP00000030253"/>
<dbReference type="GlyCosmos" id="Q9QZY7">
    <property type="glycosylation" value="3 sites, No reported glycans"/>
</dbReference>
<dbReference type="Ensembl" id="ENSCPOT00000038079.1">
    <property type="protein sequence ID" value="ENSCPOP00000030253.1"/>
    <property type="gene ID" value="ENSCPOG00000038675.1"/>
</dbReference>
<dbReference type="GeneID" id="100379554"/>
<dbReference type="KEGG" id="cpoc:100379554"/>
<dbReference type="CTD" id="100379554"/>
<dbReference type="VEuPathDB" id="HostDB:ENSCPOG00000038675"/>
<dbReference type="eggNOG" id="ENOG502SJH6">
    <property type="taxonomic scope" value="Eukaryota"/>
</dbReference>
<dbReference type="GeneTree" id="ENSGT01120000271825"/>
<dbReference type="HOGENOM" id="CLU_047501_9_2_1"/>
<dbReference type="InParanoid" id="Q9QZY7"/>
<dbReference type="OMA" id="MNDICPR"/>
<dbReference type="OrthoDB" id="8890485at2759"/>
<dbReference type="TreeFam" id="TF336723"/>
<dbReference type="Proteomes" id="UP000005447">
    <property type="component" value="Unassembled WGS sequence"/>
</dbReference>
<dbReference type="Bgee" id="ENSCPOG00000038675">
    <property type="expression patterns" value="Expressed in zone of skin and 1 other cell type or tissue"/>
</dbReference>
<dbReference type="GO" id="GO:0010008">
    <property type="term" value="C:endosome membrane"/>
    <property type="evidence" value="ECO:0007669"/>
    <property type="project" value="UniProtKB-SubCell"/>
</dbReference>
<dbReference type="GO" id="GO:0009897">
    <property type="term" value="C:external side of plasma membrane"/>
    <property type="evidence" value="ECO:0007669"/>
    <property type="project" value="TreeGrafter"/>
</dbReference>
<dbReference type="GO" id="GO:0005615">
    <property type="term" value="C:extracellular space"/>
    <property type="evidence" value="ECO:0007669"/>
    <property type="project" value="TreeGrafter"/>
</dbReference>
<dbReference type="GO" id="GO:0030883">
    <property type="term" value="F:endogenous lipid antigen binding"/>
    <property type="evidence" value="ECO:0007669"/>
    <property type="project" value="TreeGrafter"/>
</dbReference>
<dbReference type="GO" id="GO:0030884">
    <property type="term" value="F:exogenous lipid antigen binding"/>
    <property type="evidence" value="ECO:0007669"/>
    <property type="project" value="TreeGrafter"/>
</dbReference>
<dbReference type="GO" id="GO:0071723">
    <property type="term" value="F:lipopeptide binding"/>
    <property type="evidence" value="ECO:0007669"/>
    <property type="project" value="TreeGrafter"/>
</dbReference>
<dbReference type="GO" id="GO:0002250">
    <property type="term" value="P:adaptive immune response"/>
    <property type="evidence" value="ECO:0007669"/>
    <property type="project" value="UniProtKB-KW"/>
</dbReference>
<dbReference type="GO" id="GO:0048006">
    <property type="term" value="P:antigen processing and presentation, endogenous lipid antigen via MHC class Ib"/>
    <property type="evidence" value="ECO:0007669"/>
    <property type="project" value="TreeGrafter"/>
</dbReference>
<dbReference type="GO" id="GO:0048007">
    <property type="term" value="P:antigen processing and presentation, exogenous lipid antigen via MHC class Ib"/>
    <property type="evidence" value="ECO:0007669"/>
    <property type="project" value="TreeGrafter"/>
</dbReference>
<dbReference type="GO" id="GO:0001916">
    <property type="term" value="P:positive regulation of T cell mediated cytotoxicity"/>
    <property type="evidence" value="ECO:0007669"/>
    <property type="project" value="TreeGrafter"/>
</dbReference>
<dbReference type="CDD" id="cd21029">
    <property type="entry name" value="IgC1_CD1"/>
    <property type="match status" value="1"/>
</dbReference>
<dbReference type="FunFam" id="2.60.40.10:FF:000254">
    <property type="entry name" value="Antigen-presenting glycoprotein CD1d1"/>
    <property type="match status" value="1"/>
</dbReference>
<dbReference type="FunFam" id="3.30.500.10:FF:000002">
    <property type="entry name" value="Antigen-presenting glycoprotein CD1d1"/>
    <property type="match status" value="1"/>
</dbReference>
<dbReference type="Gene3D" id="2.60.40.10">
    <property type="entry name" value="Immunoglobulins"/>
    <property type="match status" value="1"/>
</dbReference>
<dbReference type="Gene3D" id="3.30.500.10">
    <property type="entry name" value="MHC class I-like antigen recognition-like"/>
    <property type="match status" value="1"/>
</dbReference>
<dbReference type="InterPro" id="IPR007110">
    <property type="entry name" value="Ig-like_dom"/>
</dbReference>
<dbReference type="InterPro" id="IPR036179">
    <property type="entry name" value="Ig-like_dom_sf"/>
</dbReference>
<dbReference type="InterPro" id="IPR013783">
    <property type="entry name" value="Ig-like_fold"/>
</dbReference>
<dbReference type="InterPro" id="IPR003597">
    <property type="entry name" value="Ig_C1-set"/>
</dbReference>
<dbReference type="InterPro" id="IPR050208">
    <property type="entry name" value="MHC_class-I_related"/>
</dbReference>
<dbReference type="InterPro" id="IPR011161">
    <property type="entry name" value="MHC_I-like_Ag-recog"/>
</dbReference>
<dbReference type="InterPro" id="IPR037055">
    <property type="entry name" value="MHC_I-like_Ag-recog_sf"/>
</dbReference>
<dbReference type="InterPro" id="IPR011162">
    <property type="entry name" value="MHC_I/II-like_Ag-recog"/>
</dbReference>
<dbReference type="PANTHER" id="PTHR16675">
    <property type="entry name" value="MHC CLASS I-RELATED"/>
    <property type="match status" value="1"/>
</dbReference>
<dbReference type="PANTHER" id="PTHR16675:SF155">
    <property type="entry name" value="T-CELL SURFACE GLYCOPROTEIN CD1C"/>
    <property type="match status" value="1"/>
</dbReference>
<dbReference type="Pfam" id="PF07654">
    <property type="entry name" value="C1-set"/>
    <property type="match status" value="1"/>
</dbReference>
<dbReference type="Pfam" id="PF16497">
    <property type="entry name" value="MHC_I_3"/>
    <property type="match status" value="1"/>
</dbReference>
<dbReference type="SMART" id="SM00407">
    <property type="entry name" value="IGc1"/>
    <property type="match status" value="1"/>
</dbReference>
<dbReference type="SUPFAM" id="SSF48726">
    <property type="entry name" value="Immunoglobulin"/>
    <property type="match status" value="1"/>
</dbReference>
<dbReference type="SUPFAM" id="SSF54452">
    <property type="entry name" value="MHC antigen-recognition domain"/>
    <property type="match status" value="1"/>
</dbReference>
<dbReference type="PROSITE" id="PS50835">
    <property type="entry name" value="IG_LIKE"/>
    <property type="match status" value="1"/>
</dbReference>
<sequence>MLFLQFLFVDVVLGGSITENVVQENISLYLMQISSYANQSWTQNLGSAWLDQLQTHSWDSESGTIIFLHAWSRGNFSNEEVTDMQLLLRVHFAELTLDVHQQASQLQFKYPFDIQVRLGCELHSRETTKSFLHVAFNGLNFLSFQHKSCVPSPEGETRAQKACDILNTYEATKEIAYYVMNDICPRLLLSLLEAGKMDLQRQVRPEVWLSSSPNLEPGRLLLACHVSGFYPKPIWVMWMRGAQEQLETKQGDILPHADGTWYLRVTLNVVAEEAAGLSCRVRHSSLRDQDIILYWGHGLSVILIALAVIVPLVLLIVLVLLCKKRCTYQGIP</sequence>
<name>CD1C2_CAVPO</name>